<dbReference type="EMBL" id="GT028742">
    <property type="status" value="NOT_ANNOTATED_CDS"/>
    <property type="molecule type" value="mRNA"/>
</dbReference>
<dbReference type="SMR" id="P0CI43"/>
<dbReference type="GO" id="GO:0005576">
    <property type="term" value="C:extracellular region"/>
    <property type="evidence" value="ECO:0007669"/>
    <property type="project" value="UniProtKB-SubCell"/>
</dbReference>
<dbReference type="GO" id="GO:0015459">
    <property type="term" value="F:potassium channel regulator activity"/>
    <property type="evidence" value="ECO:0007669"/>
    <property type="project" value="UniProtKB-KW"/>
</dbReference>
<dbReference type="GO" id="GO:0019871">
    <property type="term" value="F:sodium channel inhibitor activity"/>
    <property type="evidence" value="ECO:0007669"/>
    <property type="project" value="InterPro"/>
</dbReference>
<dbReference type="GO" id="GO:0090729">
    <property type="term" value="F:toxin activity"/>
    <property type="evidence" value="ECO:0007669"/>
    <property type="project" value="UniProtKB-KW"/>
</dbReference>
<dbReference type="Gene3D" id="3.30.30.10">
    <property type="entry name" value="Knottin, scorpion toxin-like"/>
    <property type="match status" value="1"/>
</dbReference>
<dbReference type="InterPro" id="IPR044062">
    <property type="entry name" value="LCN-type_CS_alpha_beta_dom"/>
</dbReference>
<dbReference type="InterPro" id="IPR036574">
    <property type="entry name" value="Scorpion_toxin-like_sf"/>
</dbReference>
<dbReference type="InterPro" id="IPR002061">
    <property type="entry name" value="Scorpion_toxinL/defensin"/>
</dbReference>
<dbReference type="Pfam" id="PF00537">
    <property type="entry name" value="Toxin_3"/>
    <property type="match status" value="1"/>
</dbReference>
<dbReference type="SUPFAM" id="SSF57095">
    <property type="entry name" value="Scorpion toxin-like"/>
    <property type="match status" value="1"/>
</dbReference>
<dbReference type="PROSITE" id="PS51863">
    <property type="entry name" value="LCN_CSAB"/>
    <property type="match status" value="1"/>
</dbReference>
<accession>P0CI43</accession>
<comment type="function">
    <text evidence="1">The homodimer inhibits HMG-CoA reductase (HMGCR) (32% of inhibition produced by 0.6 uM), a glycoprotein involved in the control of cholesterol biosynthesis. The inhibitory effects of bumarsin are seen at much lower concentrations (0.6 uM) than that for statins such as atorvastatin (5 mM) and simvastatin (10 uM). In addition to inhibition of HMG-CoA reductase, this protein lowers cholesterol levels by inducing steroid hormone synthesis via StAR, and by increasing reverse cholesterol transport mediated by the induction of ABCA1 and APOA1 (By similarity).</text>
</comment>
<comment type="function">
    <text evidence="3">The heterodimer non-edited LVP1 induces lipolysis in rat adipocytes. Induction of lipolysis by LVP1 appears to be mediated through the beta-2 adrenergic receptor pathway (ADRB2) (By similarity).</text>
</comment>
<comment type="function">
    <text evidence="7">The monomer edited version, similar to alpha-toxins, may modulate voltage-gated sodium channels (Nav) and may block voltage-gated potassium channels (Kv).</text>
</comment>
<comment type="subunit">
    <text evidence="4">Homodimer; disulfide-linked or monomer (edited version) or heterodimer of an alpha chain (AC P0CI44 or AC P0CI45) and this beta chain (non-edited version).</text>
</comment>
<comment type="subcellular location">
    <subcellularLocation>
        <location evidence="4">Secreted</location>
    </subcellularLocation>
</comment>
<comment type="tissue specificity">
    <text evidence="8">Expressed by the venom gland.</text>
</comment>
<comment type="domain">
    <text evidence="7">Has the structural arrangement of an alpha-helix connected to antiparallel beta-sheets by disulfide bonds (CS-alpha/beta).</text>
</comment>
<comment type="RNA editing">
    <location>
        <position position="31" evidence="1"/>
    </location>
    <text evidence="1">Partially edited. RNA editing at this position consists of an insertion of three nucleotides, restoring the first Cys residue that forms a disulfide bond with Cys-86, giving a monomeric toxin with 4 disulfide bonds (By similarity).</text>
</comment>
<comment type="similarity">
    <text evidence="7">Belongs to the long (3 C-C) scorpion toxin superfamily.</text>
</comment>
<reference key="1">
    <citation type="journal article" date="2010" name="BMC Genomics">
        <title>Comparative venom gland transcriptome analysis of the scorpion Lychas mucronatus reveals intraspecific toxic gene diversity and new venomous components.</title>
        <authorList>
            <person name="Zhao R."/>
            <person name="Ma Y."/>
            <person name="He Y."/>
            <person name="Di Z."/>
            <person name="Wu Y.-L."/>
            <person name="Cao Z.-J."/>
            <person name="Li W.-X."/>
        </authorList>
    </citation>
    <scope>NUCLEOTIDE SEQUENCE [MRNA]</scope>
    <source>
        <strain>Yunnan</strain>
        <tissue>Venom gland</tissue>
    </source>
</reference>
<organism>
    <name type="scientific">Lychas mucronatus</name>
    <name type="common">Chinese swimming scorpion</name>
    <dbReference type="NCBI Taxonomy" id="172552"/>
    <lineage>
        <taxon>Eukaryota</taxon>
        <taxon>Metazoa</taxon>
        <taxon>Ecdysozoa</taxon>
        <taxon>Arthropoda</taxon>
        <taxon>Chelicerata</taxon>
        <taxon>Arachnida</taxon>
        <taxon>Scorpiones</taxon>
        <taxon>Buthida</taxon>
        <taxon>Buthoidea</taxon>
        <taxon>Buthidae</taxon>
        <taxon>Lychas</taxon>
    </lineage>
</organism>
<protein>
    <recommendedName>
        <fullName>Lipolysis-activating peptide 1-beta chain</fullName>
        <shortName>LVP1-beta</shortName>
    </recommendedName>
</protein>
<name>LV1B2_LYCMC</name>
<keyword id="KW-1015">Disulfide bond</keyword>
<keyword id="KW-1213">G-protein coupled receptor impairing toxin</keyword>
<keyword id="KW-0872">Ion channel impairing toxin</keyword>
<keyword id="KW-0528">Neurotoxin</keyword>
<keyword id="KW-0632">Potassium channel impairing toxin</keyword>
<keyword id="KW-0691">RNA editing</keyword>
<keyword id="KW-0964">Secreted</keyword>
<keyword id="KW-0732">Signal</keyword>
<keyword id="KW-0800">Toxin</keyword>
<keyword id="KW-1220">Voltage-gated potassium channel impairing toxin</keyword>
<keyword id="KW-0738">Voltage-gated sodium channel impairing toxin</keyword>
<feature type="signal peptide" evidence="5">
    <location>
        <begin position="1"/>
        <end position="19"/>
    </location>
</feature>
<feature type="chain" id="PRO_0000403887" description="Lipolysis-activating peptide 1-beta chain">
    <location>
        <begin position="20"/>
        <end position="94"/>
    </location>
</feature>
<feature type="domain" description="LCN-type CS-alpha/beta" evidence="6">
    <location>
        <begin position="20"/>
        <end position="87"/>
    </location>
</feature>
<feature type="disulfide bond" evidence="2">
    <location>
        <begin position="34"/>
        <end position="56"/>
    </location>
</feature>
<feature type="disulfide bond" evidence="2">
    <location>
        <begin position="42"/>
        <end position="66"/>
    </location>
</feature>
<feature type="disulfide bond" evidence="2">
    <location>
        <begin position="46"/>
        <end position="68"/>
    </location>
</feature>
<feature type="disulfide bond" description="Interchain (with C-83 (AC P0CI44) or C-87 (AC P0CI45) in LVP1 chain alpha)" evidence="1">
    <location>
        <position position="86"/>
    </location>
</feature>
<proteinExistence type="inferred from homology"/>
<sequence>MKILAVVLISVIVLNTANGENYYPQKYTNDYYGCQQQTDAFCDKVCKLHLAESGFCDQSWGLAKACKCVNVSYDNSFYFNALESQCPLLNKSAA</sequence>
<evidence type="ECO:0000250" key="1"/>
<evidence type="ECO:0000250" key="2">
    <source>
        <dbReference type="UniProtKB" id="P01493"/>
    </source>
</evidence>
<evidence type="ECO:0000250" key="3">
    <source>
        <dbReference type="UniProtKB" id="P84809"/>
    </source>
</evidence>
<evidence type="ECO:0000250" key="4">
    <source>
        <dbReference type="UniProtKB" id="Q95P90"/>
    </source>
</evidence>
<evidence type="ECO:0000255" key="5"/>
<evidence type="ECO:0000255" key="6">
    <source>
        <dbReference type="PROSITE-ProRule" id="PRU01210"/>
    </source>
</evidence>
<evidence type="ECO:0000305" key="7"/>
<evidence type="ECO:0000305" key="8">
    <source>
    </source>
</evidence>